<gene>
    <name type="ordered locus">BT_0419</name>
</gene>
<sequence length="138" mass="15688">MSRIVAIDYGRKRTGIAVSDTLQLIANGLTTVPTHELLNFIGGYVAKEPVERIIIGLPKQMNNEASENMKNIEPFVRSLKKRFPELPVEYVDERFTSVLAHRTMLEAGLKKKDRQNKALVDEISATIILQTYLESKRF</sequence>
<reference key="1">
    <citation type="journal article" date="2003" name="Science">
        <title>A genomic view of the human-Bacteroides thetaiotaomicron symbiosis.</title>
        <authorList>
            <person name="Xu J."/>
            <person name="Bjursell M.K."/>
            <person name="Himrod J."/>
            <person name="Deng S."/>
            <person name="Carmichael L.K."/>
            <person name="Chiang H.C."/>
            <person name="Hooper L.V."/>
            <person name="Gordon J.I."/>
        </authorList>
    </citation>
    <scope>NUCLEOTIDE SEQUENCE [LARGE SCALE GENOMIC DNA]</scope>
    <source>
        <strain>ATCC 29148 / DSM 2079 / JCM 5827 / CCUG 10774 / NCTC 10582 / VPI-5482 / E50</strain>
    </source>
</reference>
<dbReference type="EC" id="3.1.-.-" evidence="1"/>
<dbReference type="EMBL" id="AE015928">
    <property type="protein sequence ID" value="AAO75526.1"/>
    <property type="molecule type" value="Genomic_DNA"/>
</dbReference>
<dbReference type="RefSeq" id="NP_809332.1">
    <property type="nucleotide sequence ID" value="NC_004663.1"/>
</dbReference>
<dbReference type="SMR" id="Q8AAP5"/>
<dbReference type="FunCoup" id="Q8AAP5">
    <property type="interactions" value="320"/>
</dbReference>
<dbReference type="STRING" id="226186.BT_0419"/>
<dbReference type="PaxDb" id="226186-BT_0419"/>
<dbReference type="EnsemblBacteria" id="AAO75526">
    <property type="protein sequence ID" value="AAO75526"/>
    <property type="gene ID" value="BT_0419"/>
</dbReference>
<dbReference type="KEGG" id="bth:BT_0419"/>
<dbReference type="PATRIC" id="fig|226186.12.peg.417"/>
<dbReference type="eggNOG" id="COG0816">
    <property type="taxonomic scope" value="Bacteria"/>
</dbReference>
<dbReference type="HOGENOM" id="CLU_098240_2_1_10"/>
<dbReference type="InParanoid" id="Q8AAP5"/>
<dbReference type="OrthoDB" id="9796140at2"/>
<dbReference type="Proteomes" id="UP000001414">
    <property type="component" value="Chromosome"/>
</dbReference>
<dbReference type="GO" id="GO:0005737">
    <property type="term" value="C:cytoplasm"/>
    <property type="evidence" value="ECO:0007669"/>
    <property type="project" value="UniProtKB-SubCell"/>
</dbReference>
<dbReference type="GO" id="GO:0004518">
    <property type="term" value="F:nuclease activity"/>
    <property type="evidence" value="ECO:0007669"/>
    <property type="project" value="UniProtKB-KW"/>
</dbReference>
<dbReference type="GO" id="GO:0000967">
    <property type="term" value="P:rRNA 5'-end processing"/>
    <property type="evidence" value="ECO:0000318"/>
    <property type="project" value="GO_Central"/>
</dbReference>
<dbReference type="CDD" id="cd16964">
    <property type="entry name" value="YqgF"/>
    <property type="match status" value="1"/>
</dbReference>
<dbReference type="Gene3D" id="3.30.420.140">
    <property type="entry name" value="YqgF/RNase H-like domain"/>
    <property type="match status" value="1"/>
</dbReference>
<dbReference type="HAMAP" id="MF_00651">
    <property type="entry name" value="Nuclease_YqgF"/>
    <property type="match status" value="1"/>
</dbReference>
<dbReference type="InterPro" id="IPR012337">
    <property type="entry name" value="RNaseH-like_sf"/>
</dbReference>
<dbReference type="InterPro" id="IPR005227">
    <property type="entry name" value="YqgF"/>
</dbReference>
<dbReference type="InterPro" id="IPR006641">
    <property type="entry name" value="YqgF/RNaseH-like_dom"/>
</dbReference>
<dbReference type="InterPro" id="IPR037027">
    <property type="entry name" value="YqgF/RNaseH-like_dom_sf"/>
</dbReference>
<dbReference type="NCBIfam" id="TIGR00250">
    <property type="entry name" value="RNAse_H_YqgF"/>
    <property type="match status" value="1"/>
</dbReference>
<dbReference type="PANTHER" id="PTHR33317">
    <property type="entry name" value="POLYNUCLEOTIDYL TRANSFERASE, RIBONUCLEASE H-LIKE SUPERFAMILY PROTEIN"/>
    <property type="match status" value="1"/>
</dbReference>
<dbReference type="PANTHER" id="PTHR33317:SF4">
    <property type="entry name" value="POLYNUCLEOTIDYL TRANSFERASE, RIBONUCLEASE H-LIKE SUPERFAMILY PROTEIN"/>
    <property type="match status" value="1"/>
</dbReference>
<dbReference type="Pfam" id="PF03652">
    <property type="entry name" value="RuvX"/>
    <property type="match status" value="1"/>
</dbReference>
<dbReference type="SMART" id="SM00732">
    <property type="entry name" value="YqgFc"/>
    <property type="match status" value="1"/>
</dbReference>
<dbReference type="SUPFAM" id="SSF53098">
    <property type="entry name" value="Ribonuclease H-like"/>
    <property type="match status" value="1"/>
</dbReference>
<accession>Q8AAP5</accession>
<proteinExistence type="inferred from homology"/>
<keyword id="KW-0963">Cytoplasm</keyword>
<keyword id="KW-0378">Hydrolase</keyword>
<keyword id="KW-0540">Nuclease</keyword>
<keyword id="KW-1185">Reference proteome</keyword>
<keyword id="KW-0690">Ribosome biogenesis</keyword>
<comment type="function">
    <text evidence="1">Could be a nuclease involved in processing of the 5'-end of pre-16S rRNA.</text>
</comment>
<comment type="subcellular location">
    <subcellularLocation>
        <location evidence="1">Cytoplasm</location>
    </subcellularLocation>
</comment>
<comment type="similarity">
    <text evidence="1">Belongs to the YqgF nuclease family.</text>
</comment>
<feature type="chain" id="PRO_0000172024" description="Putative pre-16S rRNA nuclease">
    <location>
        <begin position="1"/>
        <end position="138"/>
    </location>
</feature>
<organism>
    <name type="scientific">Bacteroides thetaiotaomicron (strain ATCC 29148 / DSM 2079 / JCM 5827 / CCUG 10774 / NCTC 10582 / VPI-5482 / E50)</name>
    <dbReference type="NCBI Taxonomy" id="226186"/>
    <lineage>
        <taxon>Bacteria</taxon>
        <taxon>Pseudomonadati</taxon>
        <taxon>Bacteroidota</taxon>
        <taxon>Bacteroidia</taxon>
        <taxon>Bacteroidales</taxon>
        <taxon>Bacteroidaceae</taxon>
        <taxon>Bacteroides</taxon>
    </lineage>
</organism>
<evidence type="ECO:0000255" key="1">
    <source>
        <dbReference type="HAMAP-Rule" id="MF_00651"/>
    </source>
</evidence>
<name>YQGF_BACTN</name>
<protein>
    <recommendedName>
        <fullName evidence="1">Putative pre-16S rRNA nuclease</fullName>
        <ecNumber evidence="1">3.1.-.-</ecNumber>
    </recommendedName>
</protein>